<evidence type="ECO:0000255" key="1">
    <source>
        <dbReference type="HAMAP-Rule" id="MF_01012"/>
    </source>
</evidence>
<proteinExistence type="inferred from homology"/>
<keyword id="KW-0004">4Fe-4S</keyword>
<keyword id="KW-0408">Iron</keyword>
<keyword id="KW-0411">Iron-sulfur</keyword>
<keyword id="KW-0479">Metal-binding</keyword>
<keyword id="KW-0489">Methyltransferase</keyword>
<keyword id="KW-0698">rRNA processing</keyword>
<keyword id="KW-0949">S-adenosyl-L-methionine</keyword>
<keyword id="KW-0808">Transferase</keyword>
<gene>
    <name evidence="1" type="primary">rlmC</name>
    <name type="synonym">rumB</name>
    <name type="ordered locus">YPTB1366</name>
</gene>
<accession>Q66CN7</accession>
<protein>
    <recommendedName>
        <fullName evidence="1">23S rRNA (uracil(747)-C(5))-methyltransferase RlmC</fullName>
        <ecNumber evidence="1">2.1.1.189</ecNumber>
    </recommendedName>
    <alternativeName>
        <fullName evidence="1">23S rRNA(m5U747)-methyltransferase</fullName>
    </alternativeName>
</protein>
<comment type="function">
    <text evidence="1">Catalyzes the formation of 5-methyl-uridine at position 747 (m5U747) in 23S rRNA.</text>
</comment>
<comment type="catalytic activity">
    <reaction evidence="1">
        <text>uridine(747) in 23S rRNA + S-adenosyl-L-methionine = 5-methyluridine(747) in 23S rRNA + S-adenosyl-L-homocysteine + H(+)</text>
        <dbReference type="Rhea" id="RHEA:42628"/>
        <dbReference type="Rhea" id="RHEA-COMP:10154"/>
        <dbReference type="Rhea" id="RHEA-COMP:10155"/>
        <dbReference type="ChEBI" id="CHEBI:15378"/>
        <dbReference type="ChEBI" id="CHEBI:57856"/>
        <dbReference type="ChEBI" id="CHEBI:59789"/>
        <dbReference type="ChEBI" id="CHEBI:65315"/>
        <dbReference type="ChEBI" id="CHEBI:74447"/>
        <dbReference type="EC" id="2.1.1.189"/>
    </reaction>
</comment>
<comment type="similarity">
    <text evidence="1">Belongs to the class I-like SAM-binding methyltransferase superfamily. RNA M5U methyltransferase family. RlmC subfamily.</text>
</comment>
<reference key="1">
    <citation type="journal article" date="2004" name="Proc. Natl. Acad. Sci. U.S.A.">
        <title>Insights into the evolution of Yersinia pestis through whole-genome comparison with Yersinia pseudotuberculosis.</title>
        <authorList>
            <person name="Chain P.S.G."/>
            <person name="Carniel E."/>
            <person name="Larimer F.W."/>
            <person name="Lamerdin J."/>
            <person name="Stoutland P.O."/>
            <person name="Regala W.M."/>
            <person name="Georgescu A.M."/>
            <person name="Vergez L.M."/>
            <person name="Land M.L."/>
            <person name="Motin V.L."/>
            <person name="Brubaker R.R."/>
            <person name="Fowler J."/>
            <person name="Hinnebusch J."/>
            <person name="Marceau M."/>
            <person name="Medigue C."/>
            <person name="Simonet M."/>
            <person name="Chenal-Francisque V."/>
            <person name="Souza B."/>
            <person name="Dacheux D."/>
            <person name="Elliott J.M."/>
            <person name="Derbise A."/>
            <person name="Hauser L.J."/>
            <person name="Garcia E."/>
        </authorList>
    </citation>
    <scope>NUCLEOTIDE SEQUENCE [LARGE SCALE GENOMIC DNA]</scope>
    <source>
        <strain>IP32953</strain>
    </source>
</reference>
<feature type="chain" id="PRO_0000161942" description="23S rRNA (uracil(747)-C(5))-methyltransferase RlmC">
    <location>
        <begin position="1"/>
        <end position="376"/>
    </location>
</feature>
<feature type="active site" description="Nucleophile" evidence="1">
    <location>
        <position position="334"/>
    </location>
</feature>
<feature type="binding site" evidence="1">
    <location>
        <position position="3"/>
    </location>
    <ligand>
        <name>[4Fe-4S] cluster</name>
        <dbReference type="ChEBI" id="CHEBI:49883"/>
    </ligand>
</feature>
<feature type="binding site" evidence="1">
    <location>
        <position position="11"/>
    </location>
    <ligand>
        <name>[4Fe-4S] cluster</name>
        <dbReference type="ChEBI" id="CHEBI:49883"/>
    </ligand>
</feature>
<feature type="binding site" evidence="1">
    <location>
        <position position="14"/>
    </location>
    <ligand>
        <name>[4Fe-4S] cluster</name>
        <dbReference type="ChEBI" id="CHEBI:49883"/>
    </ligand>
</feature>
<feature type="binding site" evidence="1">
    <location>
        <position position="87"/>
    </location>
    <ligand>
        <name>[4Fe-4S] cluster</name>
        <dbReference type="ChEBI" id="CHEBI:49883"/>
    </ligand>
</feature>
<feature type="binding site" evidence="1">
    <location>
        <position position="212"/>
    </location>
    <ligand>
        <name>S-adenosyl-L-methionine</name>
        <dbReference type="ChEBI" id="CHEBI:59789"/>
    </ligand>
</feature>
<feature type="binding site" evidence="1">
    <location>
        <position position="241"/>
    </location>
    <ligand>
        <name>S-adenosyl-L-methionine</name>
        <dbReference type="ChEBI" id="CHEBI:59789"/>
    </ligand>
</feature>
<feature type="binding site" evidence="1">
    <location>
        <position position="262"/>
    </location>
    <ligand>
        <name>S-adenosyl-L-methionine</name>
        <dbReference type="ChEBI" id="CHEBI:59789"/>
    </ligand>
</feature>
<feature type="binding site" evidence="1">
    <location>
        <position position="307"/>
    </location>
    <ligand>
        <name>S-adenosyl-L-methionine</name>
        <dbReference type="ChEBI" id="CHEBI:59789"/>
    </ligand>
</feature>
<name>RLMC_YERPS</name>
<dbReference type="EC" id="2.1.1.189" evidence="1"/>
<dbReference type="EMBL" id="BX936398">
    <property type="protein sequence ID" value="CAH20606.1"/>
    <property type="molecule type" value="Genomic_DNA"/>
</dbReference>
<dbReference type="RefSeq" id="WP_011192039.1">
    <property type="nucleotide sequence ID" value="NC_006155.1"/>
</dbReference>
<dbReference type="SMR" id="Q66CN7"/>
<dbReference type="KEGG" id="ypo:BZ17_1153"/>
<dbReference type="KEGG" id="yps:YPTB1366"/>
<dbReference type="PATRIC" id="fig|273123.14.peg.1229"/>
<dbReference type="Proteomes" id="UP000001011">
    <property type="component" value="Chromosome"/>
</dbReference>
<dbReference type="GO" id="GO:0051539">
    <property type="term" value="F:4 iron, 4 sulfur cluster binding"/>
    <property type="evidence" value="ECO:0007669"/>
    <property type="project" value="UniProtKB-KW"/>
</dbReference>
<dbReference type="GO" id="GO:0005506">
    <property type="term" value="F:iron ion binding"/>
    <property type="evidence" value="ECO:0007669"/>
    <property type="project" value="UniProtKB-UniRule"/>
</dbReference>
<dbReference type="GO" id="GO:0070041">
    <property type="term" value="F:rRNA (uridine-C5-)-methyltransferase activity"/>
    <property type="evidence" value="ECO:0007669"/>
    <property type="project" value="UniProtKB-UniRule"/>
</dbReference>
<dbReference type="GO" id="GO:0070475">
    <property type="term" value="P:rRNA base methylation"/>
    <property type="evidence" value="ECO:0007669"/>
    <property type="project" value="TreeGrafter"/>
</dbReference>
<dbReference type="CDD" id="cd02440">
    <property type="entry name" value="AdoMet_MTases"/>
    <property type="match status" value="1"/>
</dbReference>
<dbReference type="FunFam" id="2.40.50.1070:FF:000002">
    <property type="entry name" value="23S rRNA (uracil(747)-C(5))-methyltransferase RlmC"/>
    <property type="match status" value="1"/>
</dbReference>
<dbReference type="Gene3D" id="2.40.50.1070">
    <property type="match status" value="1"/>
</dbReference>
<dbReference type="Gene3D" id="3.40.50.150">
    <property type="entry name" value="Vaccinia Virus protein VP39"/>
    <property type="match status" value="1"/>
</dbReference>
<dbReference type="HAMAP" id="MF_01012">
    <property type="entry name" value="23SrRNA_methyltr_RlmC"/>
    <property type="match status" value="1"/>
</dbReference>
<dbReference type="InterPro" id="IPR011825">
    <property type="entry name" value="23SrRNA_MeTrfase_RlmC"/>
</dbReference>
<dbReference type="InterPro" id="IPR030390">
    <property type="entry name" value="MeTrfase_TrmA_AS"/>
</dbReference>
<dbReference type="InterPro" id="IPR030391">
    <property type="entry name" value="MeTrfase_TrmA_CS"/>
</dbReference>
<dbReference type="InterPro" id="IPR029063">
    <property type="entry name" value="SAM-dependent_MTases_sf"/>
</dbReference>
<dbReference type="InterPro" id="IPR010280">
    <property type="entry name" value="U5_MeTrfase_fam"/>
</dbReference>
<dbReference type="NCBIfam" id="TIGR02085">
    <property type="entry name" value="meth_trns_rumB"/>
    <property type="match status" value="1"/>
</dbReference>
<dbReference type="NCBIfam" id="TIGR00479">
    <property type="entry name" value="rumA"/>
    <property type="match status" value="1"/>
</dbReference>
<dbReference type="PANTHER" id="PTHR11061">
    <property type="entry name" value="RNA M5U METHYLTRANSFERASE"/>
    <property type="match status" value="1"/>
</dbReference>
<dbReference type="PANTHER" id="PTHR11061:SF30">
    <property type="entry name" value="TRNA (URACIL(54)-C(5))-METHYLTRANSFERASE"/>
    <property type="match status" value="1"/>
</dbReference>
<dbReference type="Pfam" id="PF05958">
    <property type="entry name" value="tRNA_U5-meth_tr"/>
    <property type="match status" value="1"/>
</dbReference>
<dbReference type="SUPFAM" id="SSF53335">
    <property type="entry name" value="S-adenosyl-L-methionine-dependent methyltransferases"/>
    <property type="match status" value="1"/>
</dbReference>
<dbReference type="PROSITE" id="PS51687">
    <property type="entry name" value="SAM_MT_RNA_M5U"/>
    <property type="match status" value="1"/>
</dbReference>
<dbReference type="PROSITE" id="PS01230">
    <property type="entry name" value="TRMA_1"/>
    <property type="match status" value="1"/>
</dbReference>
<dbReference type="PROSITE" id="PS01231">
    <property type="entry name" value="TRMA_2"/>
    <property type="match status" value="1"/>
</dbReference>
<sequence length="376" mass="42144">MHCAQYTAGRCRSCQWLDKPYPQQLADKQHHLESLLAGHAVTQWLAPVFGRESTFRNKAKMVVSGSVERPLLGMLHRDGTPVDLCACPLYPPSFEPVFTVLKTFIARAGLTPYNVARKRGELKFLLLTESTYNGELMLRFVLRSETKLAQLIAALPWLQQQLPQLAVISANIQPVHMAILEGEREIPLTEQQALPERFNQVPLYIRPQSFFQTNPPVAASLYATARQWVQEHEVHSMWDLFCGVGGFGLHCAGPETQLTGIEISAEAIACARQSAEQLGLKNVSFAALDSTRFATAEAQIPELVLVNPPRRGIGRELCDYLSQMAPKFILYSSCNAETMAKDISLLAGYHIERVQLFDMFPHTSHYEVLTLLALRR</sequence>
<organism>
    <name type="scientific">Yersinia pseudotuberculosis serotype I (strain IP32953)</name>
    <dbReference type="NCBI Taxonomy" id="273123"/>
    <lineage>
        <taxon>Bacteria</taxon>
        <taxon>Pseudomonadati</taxon>
        <taxon>Pseudomonadota</taxon>
        <taxon>Gammaproteobacteria</taxon>
        <taxon>Enterobacterales</taxon>
        <taxon>Yersiniaceae</taxon>
        <taxon>Yersinia</taxon>
    </lineage>
</organism>